<organism>
    <name type="scientific">Saccharomyces cerevisiae (strain ATCC 204508 / S288c)</name>
    <name type="common">Baker's yeast</name>
    <dbReference type="NCBI Taxonomy" id="559292"/>
    <lineage>
        <taxon>Eukaryota</taxon>
        <taxon>Fungi</taxon>
        <taxon>Dikarya</taxon>
        <taxon>Ascomycota</taxon>
        <taxon>Saccharomycotina</taxon>
        <taxon>Saccharomycetes</taxon>
        <taxon>Saccharomycetales</taxon>
        <taxon>Saccharomycetaceae</taxon>
        <taxon>Saccharomyces</taxon>
    </lineage>
</organism>
<keyword id="KW-0002">3D-structure</keyword>
<keyword id="KW-0134">Cell wall</keyword>
<keyword id="KW-0325">Glycoprotein</keyword>
<keyword id="KW-0336">GPI-anchor</keyword>
<keyword id="KW-0449">Lipoprotein</keyword>
<keyword id="KW-0472">Membrane</keyword>
<keyword id="KW-1185">Reference proteome</keyword>
<keyword id="KW-0677">Repeat</keyword>
<keyword id="KW-0964">Secreted</keyword>
<keyword id="KW-0732">Signal</keyword>
<name>FLO5_YEAST</name>
<evidence type="ECO:0000250" key="1"/>
<evidence type="ECO:0000255" key="2"/>
<evidence type="ECO:0000255" key="3">
    <source>
        <dbReference type="PROSITE-ProRule" id="PRU01164"/>
    </source>
</evidence>
<evidence type="ECO:0000256" key="4">
    <source>
        <dbReference type="SAM" id="MobiDB-lite"/>
    </source>
</evidence>
<evidence type="ECO:0000269" key="5">
    <source>
    </source>
</evidence>
<evidence type="ECO:0000269" key="6">
    <source>
    </source>
</evidence>
<evidence type="ECO:0000269" key="7">
    <source>
    </source>
</evidence>
<evidence type="ECO:0000269" key="8">
    <source>
    </source>
</evidence>
<evidence type="ECO:0000305" key="9"/>
<evidence type="ECO:0007829" key="10">
    <source>
        <dbReference type="PDB" id="2XJP"/>
    </source>
</evidence>
<evidence type="ECO:0007829" key="11">
    <source>
        <dbReference type="PDB" id="4AHW"/>
    </source>
</evidence>
<gene>
    <name type="primary">FLO5</name>
    <name type="ordered locus">YHR211W</name>
</gene>
<proteinExistence type="evidence at protein level"/>
<protein>
    <recommendedName>
        <fullName>Flocculation protein FLO5</fullName>
        <shortName>Flocculin-5</shortName>
    </recommendedName>
</protein>
<accession>P38894</accession>
<accession>D3DLG0</accession>
<feature type="signal peptide" evidence="2">
    <location>
        <begin position="1"/>
        <end position="24"/>
    </location>
</feature>
<feature type="chain" id="PRO_0000021275" description="Flocculation protein FLO5">
    <location>
        <begin position="25"/>
        <end position="1052"/>
    </location>
</feature>
<feature type="propeptide" id="PRO_0000021276" description="Removed in mature form" evidence="2">
    <location>
        <begin position="1053"/>
        <end position="1075"/>
    </location>
</feature>
<feature type="domain" description="PA14" evidence="3">
    <location>
        <begin position="74"/>
        <end position="249"/>
    </location>
</feature>
<feature type="repeat" description="1-1" evidence="6">
    <location>
        <begin position="278"/>
        <end position="322"/>
    </location>
</feature>
<feature type="repeat" description="1-2" evidence="6">
    <location>
        <begin position="323"/>
        <end position="367"/>
    </location>
</feature>
<feature type="repeat" description="1-3" evidence="6">
    <location>
        <begin position="368"/>
        <end position="412"/>
    </location>
</feature>
<feature type="repeat" description="1-4" evidence="6">
    <location>
        <begin position="413"/>
        <end position="457"/>
    </location>
</feature>
<feature type="repeat" description="1-5" evidence="6">
    <location>
        <begin position="458"/>
        <end position="502"/>
    </location>
</feature>
<feature type="repeat" description="1-6" evidence="6">
    <location>
        <begin position="503"/>
        <end position="547"/>
    </location>
</feature>
<feature type="repeat" description="1-7" evidence="6">
    <location>
        <begin position="548"/>
        <end position="592"/>
    </location>
</feature>
<feature type="repeat" description="1-8" evidence="6">
    <location>
        <begin position="593"/>
        <end position="637"/>
    </location>
</feature>
<feature type="repeat" description="2-1" evidence="6">
    <location>
        <begin position="667"/>
        <end position="686"/>
    </location>
</feature>
<feature type="repeat" description="2-2" evidence="6">
    <location>
        <begin position="687"/>
        <end position="706"/>
    </location>
</feature>
<feature type="repeat" description="3-1" evidence="6">
    <location>
        <begin position="775"/>
        <end position="825"/>
    </location>
</feature>
<feature type="repeat" description="3-2" evidence="6">
    <location>
        <begin position="847"/>
        <end position="897"/>
    </location>
</feature>
<feature type="repeat" description="3-3" evidence="6">
    <location>
        <begin position="898"/>
        <end position="948"/>
    </location>
</feature>
<feature type="region of interest" description="Sugar recognition" evidence="1">
    <location>
        <begin position="197"/>
        <end position="240"/>
    </location>
</feature>
<feature type="region of interest" description="8 X 45 AA approximate tandem repeats, Thr-rich">
    <location>
        <begin position="278"/>
        <end position="637"/>
    </location>
</feature>
<feature type="region of interest" description="Disordered" evidence="4">
    <location>
        <begin position="322"/>
        <end position="349"/>
    </location>
</feature>
<feature type="region of interest" description="Disordered" evidence="4">
    <location>
        <begin position="366"/>
        <end position="394"/>
    </location>
</feature>
<feature type="region of interest" description="Disordered" evidence="4">
    <location>
        <begin position="456"/>
        <end position="484"/>
    </location>
</feature>
<feature type="region of interest" description="Disordered" evidence="4">
    <location>
        <begin position="546"/>
        <end position="574"/>
    </location>
</feature>
<feature type="region of interest" description="2 X 20 AA approximate tandem repeats, Ser-rich">
    <location>
        <begin position="667"/>
        <end position="706"/>
    </location>
</feature>
<feature type="region of interest" description="Disordered" evidence="4">
    <location>
        <begin position="702"/>
        <end position="781"/>
    </location>
</feature>
<feature type="region of interest" description="3 X 51 AA approximate repeats, Ser/Thr-rich">
    <location>
        <begin position="775"/>
        <end position="948"/>
    </location>
</feature>
<feature type="region of interest" description="Disordered" evidence="4">
    <location>
        <begin position="948"/>
        <end position="980"/>
    </location>
</feature>
<feature type="region of interest" description="Disordered" evidence="4">
    <location>
        <begin position="1016"/>
        <end position="1038"/>
    </location>
</feature>
<feature type="compositionally biased region" description="Low complexity" evidence="4">
    <location>
        <begin position="322"/>
        <end position="345"/>
    </location>
</feature>
<feature type="compositionally biased region" description="Low complexity" evidence="4">
    <location>
        <begin position="367"/>
        <end position="390"/>
    </location>
</feature>
<feature type="compositionally biased region" description="Low complexity" evidence="4">
    <location>
        <begin position="457"/>
        <end position="480"/>
    </location>
</feature>
<feature type="compositionally biased region" description="Low complexity" evidence="4">
    <location>
        <begin position="547"/>
        <end position="570"/>
    </location>
</feature>
<feature type="compositionally biased region" description="Low complexity" evidence="4">
    <location>
        <begin position="702"/>
        <end position="762"/>
    </location>
</feature>
<feature type="compositionally biased region" description="Polar residues" evidence="4">
    <location>
        <begin position="763"/>
        <end position="781"/>
    </location>
</feature>
<feature type="compositionally biased region" description="Polar residues" evidence="4">
    <location>
        <begin position="948"/>
        <end position="958"/>
    </location>
</feature>
<feature type="compositionally biased region" description="Low complexity" evidence="4">
    <location>
        <begin position="959"/>
        <end position="977"/>
    </location>
</feature>
<feature type="compositionally biased region" description="Low complexity" evidence="4">
    <location>
        <begin position="1016"/>
        <end position="1026"/>
    </location>
</feature>
<feature type="compositionally biased region" description="Polar residues" evidence="4">
    <location>
        <begin position="1027"/>
        <end position="1038"/>
    </location>
</feature>
<feature type="lipid moiety-binding region" description="GPI-anchor amidated glycine" evidence="2">
    <location>
        <position position="1052"/>
    </location>
</feature>
<feature type="glycosylation site" description="N-linked (GlcNAc...) asparagine" evidence="2">
    <location>
        <position position="135"/>
    </location>
</feature>
<feature type="glycosylation site" description="N-linked (GlcNAc...) asparagine" evidence="2">
    <location>
        <position position="187"/>
    </location>
</feature>
<feature type="glycosylation site" description="N-linked (GlcNAc...) asparagine" evidence="2">
    <location>
        <position position="203"/>
    </location>
</feature>
<feature type="glycosylation site" description="N-linked (GlcNAc...) asparagine" evidence="2">
    <location>
        <position position="262"/>
    </location>
</feature>
<feature type="glycosylation site" description="N-linked (GlcNAc...) asparagine" evidence="2">
    <location>
        <position position="663"/>
    </location>
</feature>
<feature type="glycosylation site" description="N-linked (GlcNAc...) asparagine" evidence="2">
    <location>
        <position position="749"/>
    </location>
</feature>
<feature type="strand" evidence="10">
    <location>
        <begin position="36"/>
        <end position="45"/>
    </location>
</feature>
<feature type="helix" evidence="10">
    <location>
        <begin position="53"/>
        <end position="55"/>
    </location>
</feature>
<feature type="helix" evidence="10">
    <location>
        <begin position="57"/>
        <end position="61"/>
    </location>
</feature>
<feature type="helix" evidence="10">
    <location>
        <begin position="63"/>
        <end position="66"/>
    </location>
</feature>
<feature type="strand" evidence="10">
    <location>
        <begin position="69"/>
        <end position="76"/>
    </location>
</feature>
<feature type="strand" evidence="10">
    <location>
        <begin position="81"/>
        <end position="83"/>
    </location>
</feature>
<feature type="strand" evidence="10">
    <location>
        <begin position="86"/>
        <end position="89"/>
    </location>
</feature>
<feature type="strand" evidence="10">
    <location>
        <begin position="92"/>
        <end position="95"/>
    </location>
</feature>
<feature type="helix" evidence="10">
    <location>
        <begin position="98"/>
        <end position="100"/>
    </location>
</feature>
<feature type="turn" evidence="10">
    <location>
        <begin position="103"/>
        <end position="105"/>
    </location>
</feature>
<feature type="turn" evidence="10">
    <location>
        <begin position="108"/>
        <end position="110"/>
    </location>
</feature>
<feature type="turn" evidence="10">
    <location>
        <begin position="125"/>
        <end position="128"/>
    </location>
</feature>
<feature type="strand" evidence="10">
    <location>
        <begin position="135"/>
        <end position="144"/>
    </location>
</feature>
<feature type="strand" evidence="10">
    <location>
        <begin position="147"/>
        <end position="157"/>
    </location>
</feature>
<feature type="strand" evidence="10">
    <location>
        <begin position="160"/>
        <end position="168"/>
    </location>
</feature>
<feature type="turn" evidence="10">
    <location>
        <begin position="169"/>
        <end position="171"/>
    </location>
</feature>
<feature type="strand" evidence="10">
    <location>
        <begin position="189"/>
        <end position="192"/>
    </location>
</feature>
<feature type="strand" evidence="11">
    <location>
        <begin position="196"/>
        <end position="198"/>
    </location>
</feature>
<feature type="strand" evidence="10">
    <location>
        <begin position="205"/>
        <end position="210"/>
    </location>
</feature>
<feature type="strand" evidence="10">
    <location>
        <begin position="215"/>
        <end position="224"/>
    </location>
</feature>
<feature type="strand" evidence="10">
    <location>
        <begin position="229"/>
        <end position="231"/>
    </location>
</feature>
<feature type="strand" evidence="10">
    <location>
        <begin position="233"/>
        <end position="236"/>
    </location>
</feature>
<feature type="strand" evidence="10">
    <location>
        <begin position="242"/>
        <end position="246"/>
    </location>
</feature>
<feature type="turn" evidence="10">
    <location>
        <begin position="248"/>
        <end position="250"/>
    </location>
</feature>
<feature type="strand" evidence="10">
    <location>
        <begin position="251"/>
        <end position="253"/>
    </location>
</feature>
<feature type="strand" evidence="10">
    <location>
        <begin position="264"/>
        <end position="266"/>
    </location>
</feature>
<feature type="turn" evidence="10">
    <location>
        <begin position="268"/>
        <end position="270"/>
    </location>
</feature>
<dbReference type="EMBL" id="U00029">
    <property type="protein sequence ID" value="AAB69731.1"/>
    <property type="molecule type" value="Genomic_DNA"/>
</dbReference>
<dbReference type="EMBL" id="BK006934">
    <property type="protein sequence ID" value="DAA06904.1"/>
    <property type="molecule type" value="Genomic_DNA"/>
</dbReference>
<dbReference type="PIR" id="S48992">
    <property type="entry name" value="S48992"/>
</dbReference>
<dbReference type="RefSeq" id="NP_012081.1">
    <property type="nucleotide sequence ID" value="NM_001179342.1"/>
</dbReference>
<dbReference type="PDB" id="2XJP">
    <property type="method" value="X-ray"/>
    <property type="resolution" value="0.95 A"/>
    <property type="chains" value="A=23-271"/>
</dbReference>
<dbReference type="PDB" id="2XJQ">
    <property type="method" value="X-ray"/>
    <property type="resolution" value="1.35 A"/>
    <property type="chains" value="A=23-271"/>
</dbReference>
<dbReference type="PDB" id="2XJR">
    <property type="method" value="X-ray"/>
    <property type="resolution" value="1.25 A"/>
    <property type="chains" value="A=23-271"/>
</dbReference>
<dbReference type="PDB" id="2XJS">
    <property type="method" value="X-ray"/>
    <property type="resolution" value="1.30 A"/>
    <property type="chains" value="A=23-271"/>
</dbReference>
<dbReference type="PDB" id="2XJT">
    <property type="method" value="X-ray"/>
    <property type="resolution" value="1.20 A"/>
    <property type="chains" value="A=23-271"/>
</dbReference>
<dbReference type="PDB" id="2XJU">
    <property type="method" value="X-ray"/>
    <property type="resolution" value="1.70 A"/>
    <property type="chains" value="A=23-271"/>
</dbReference>
<dbReference type="PDB" id="2XJV">
    <property type="method" value="X-ray"/>
    <property type="resolution" value="1.74 A"/>
    <property type="chains" value="A=23-271"/>
</dbReference>
<dbReference type="PDB" id="4AHW">
    <property type="method" value="X-ray"/>
    <property type="resolution" value="1.50 A"/>
    <property type="chains" value="A=23-271"/>
</dbReference>
<dbReference type="PDB" id="4AHX">
    <property type="method" value="X-ray"/>
    <property type="resolution" value="1.60 A"/>
    <property type="chains" value="A=23-271"/>
</dbReference>
<dbReference type="PDB" id="4AHY">
    <property type="method" value="X-ray"/>
    <property type="resolution" value="1.70 A"/>
    <property type="chains" value="A=23-271"/>
</dbReference>
<dbReference type="PDB" id="4AHZ">
    <property type="method" value="X-ray"/>
    <property type="resolution" value="1.90 A"/>
    <property type="chains" value="A=23-271"/>
</dbReference>
<dbReference type="PDB" id="4AI0">
    <property type="method" value="X-ray"/>
    <property type="resolution" value="1.80 A"/>
    <property type="chains" value="A=23-271"/>
</dbReference>
<dbReference type="PDB" id="4AI1">
    <property type="method" value="X-ray"/>
    <property type="resolution" value="1.80 A"/>
    <property type="chains" value="A=23-271"/>
</dbReference>
<dbReference type="PDB" id="4AI2">
    <property type="method" value="X-ray"/>
    <property type="resolution" value="1.79 A"/>
    <property type="chains" value="A=23-271"/>
</dbReference>
<dbReference type="PDB" id="4AI3">
    <property type="method" value="X-ray"/>
    <property type="resolution" value="1.90 A"/>
    <property type="chains" value="A=23-271"/>
</dbReference>
<dbReference type="PDBsum" id="2XJP"/>
<dbReference type="PDBsum" id="2XJQ"/>
<dbReference type="PDBsum" id="2XJR"/>
<dbReference type="PDBsum" id="2XJS"/>
<dbReference type="PDBsum" id="2XJT"/>
<dbReference type="PDBsum" id="2XJU"/>
<dbReference type="PDBsum" id="2XJV"/>
<dbReference type="PDBsum" id="4AHW"/>
<dbReference type="PDBsum" id="4AHX"/>
<dbReference type="PDBsum" id="4AHY"/>
<dbReference type="PDBsum" id="4AHZ"/>
<dbReference type="PDBsum" id="4AI0"/>
<dbReference type="PDBsum" id="4AI1"/>
<dbReference type="PDBsum" id="4AI2"/>
<dbReference type="PDBsum" id="4AI3"/>
<dbReference type="SMR" id="P38894"/>
<dbReference type="BioGRID" id="36645">
    <property type="interactions" value="9"/>
</dbReference>
<dbReference type="DIP" id="DIP-4056N"/>
<dbReference type="FunCoup" id="P38894">
    <property type="interactions" value="55"/>
</dbReference>
<dbReference type="IntAct" id="P38894">
    <property type="interactions" value="3"/>
</dbReference>
<dbReference type="STRING" id="4932.YHR211W"/>
<dbReference type="UniLectin" id="P38894"/>
<dbReference type="GlyCosmos" id="P38894">
    <property type="glycosylation" value="6 sites, No reported glycans"/>
</dbReference>
<dbReference type="GlyGen" id="P38894">
    <property type="glycosylation" value="6 sites"/>
</dbReference>
<dbReference type="PaxDb" id="4932-YHR211W"/>
<dbReference type="EnsemblFungi" id="YHR211W_mRNA">
    <property type="protein sequence ID" value="YHR211W"/>
    <property type="gene ID" value="YHR211W"/>
</dbReference>
<dbReference type="GeneID" id="856618"/>
<dbReference type="KEGG" id="sce:YHR211W"/>
<dbReference type="AGR" id="SGD:S000001254"/>
<dbReference type="SGD" id="S000001254">
    <property type="gene designation" value="FLO5"/>
</dbReference>
<dbReference type="VEuPathDB" id="FungiDB:YHR211W"/>
<dbReference type="eggNOG" id="ENOG502QPQC">
    <property type="taxonomic scope" value="Eukaryota"/>
</dbReference>
<dbReference type="GeneTree" id="ENSGT00940000176342"/>
<dbReference type="HOGENOM" id="CLU_006076_0_0_1"/>
<dbReference type="InParanoid" id="P38894"/>
<dbReference type="OMA" id="TRGWAGN"/>
<dbReference type="OrthoDB" id="4070698at2759"/>
<dbReference type="BioCyc" id="YEAST:G3O-31236-MONOMER"/>
<dbReference type="BioGRID-ORCS" id="856618">
    <property type="hits" value="0 hits in 10 CRISPR screens"/>
</dbReference>
<dbReference type="EvolutionaryTrace" id="P38894"/>
<dbReference type="PRO" id="PR:P38894"/>
<dbReference type="Proteomes" id="UP000002311">
    <property type="component" value="Chromosome VIII"/>
</dbReference>
<dbReference type="RNAct" id="P38894">
    <property type="molecule type" value="protein"/>
</dbReference>
<dbReference type="GO" id="GO:0071944">
    <property type="term" value="C:cell periphery"/>
    <property type="evidence" value="ECO:0007005"/>
    <property type="project" value="SGD"/>
</dbReference>
<dbReference type="GO" id="GO:0005576">
    <property type="term" value="C:extracellular region"/>
    <property type="evidence" value="ECO:0007669"/>
    <property type="project" value="UniProtKB-KW"/>
</dbReference>
<dbReference type="GO" id="GO:0009277">
    <property type="term" value="C:fungal-type cell wall"/>
    <property type="evidence" value="ECO:0000314"/>
    <property type="project" value="SGD"/>
</dbReference>
<dbReference type="GO" id="GO:0098552">
    <property type="term" value="C:side of membrane"/>
    <property type="evidence" value="ECO:0007669"/>
    <property type="project" value="UniProtKB-KW"/>
</dbReference>
<dbReference type="GO" id="GO:0005537">
    <property type="term" value="F:D-mannose binding"/>
    <property type="evidence" value="ECO:0000315"/>
    <property type="project" value="SGD"/>
</dbReference>
<dbReference type="GO" id="GO:0031589">
    <property type="term" value="P:cell-substrate adhesion"/>
    <property type="evidence" value="ECO:0000315"/>
    <property type="project" value="SGD"/>
</dbReference>
<dbReference type="GO" id="GO:0000128">
    <property type="term" value="P:flocculation"/>
    <property type="evidence" value="ECO:0000315"/>
    <property type="project" value="SGD"/>
</dbReference>
<dbReference type="Gene3D" id="2.60.120.1560">
    <property type="match status" value="1"/>
</dbReference>
<dbReference type="Gene3D" id="6.20.60.20">
    <property type="match status" value="1"/>
</dbReference>
<dbReference type="InterPro" id="IPR001389">
    <property type="entry name" value="Flocculin"/>
</dbReference>
<dbReference type="InterPro" id="IPR025928">
    <property type="entry name" value="Flocculin_t3_rpt"/>
</dbReference>
<dbReference type="InterPro" id="IPR037524">
    <property type="entry name" value="PA14/GLEYA"/>
</dbReference>
<dbReference type="InterPro" id="IPR011658">
    <property type="entry name" value="PA14_dom"/>
</dbReference>
<dbReference type="Pfam" id="PF00624">
    <property type="entry name" value="Flocculin"/>
    <property type="match status" value="8"/>
</dbReference>
<dbReference type="Pfam" id="PF13928">
    <property type="entry name" value="Flocculin_t3"/>
    <property type="match status" value="3"/>
</dbReference>
<dbReference type="Pfam" id="PF07691">
    <property type="entry name" value="PA14"/>
    <property type="match status" value="1"/>
</dbReference>
<dbReference type="SMART" id="SM00758">
    <property type="entry name" value="PA14"/>
    <property type="match status" value="1"/>
</dbReference>
<dbReference type="SUPFAM" id="SSF56988">
    <property type="entry name" value="Anthrax protective antigen"/>
    <property type="match status" value="1"/>
</dbReference>
<dbReference type="PROSITE" id="PS51820">
    <property type="entry name" value="PA14"/>
    <property type="match status" value="1"/>
</dbReference>
<sequence>MTIAHHCIFLVILAFLALINVASGATEACLPAGQRKSGMNINFYQYSLKDSSTYSNAAYMAYGYASKTKLGSVGGQTDISIDYNIPCVSSSGTFPCPQEDSYGNWGCKGMGACSNSQGIAYWSTDLFGFYTTPTNVTLEMTGYFLPPQTGSYTFSFATVDDSAILSVGGSIAFECCAQEQPPITSTNFTINGIKPWDGSLPDNITGTVYMYAGYYYPLKVVYSNAVSWGTLPISVELPDGTTVSDNFEGYVYSFDDDLSQSNCTIPDPSIHTTSTITTTTEPWTGTFTSTSTEMTTITDTNGQLTDETVIVIRTPTTASTITTTTEPWTGTFTSTSTEMTTVTGTNGQPTDETVIVIRTPTSEGLITTTTEPWTGTFTSTSTEMTTVTGTNGQPTDETVIVIRTPTSEGLITTTTEPWTGTFTSTSTEVTTITGTNGQPTDETVIVIRTPTSEGLITTTTEPWTGTFTSTSTEMTTVTGTNGQPTDETVIVIRTPTSEGLISTTTEPWTGTFTSTSTEVTTITGTNGQPTDETVIVIRTPTSEGLITTTTEPWTGTFTSTSTEMTTVTGTNGQPTDETVIVIRTPTSEGLITRTTEPWTGTFTSTSTEVTTITGTNGQPTDETVIVIRTPTTAISSSLSSSSGQITSSITSSRPIITPFYPSNGTSVISSSVISSSVTSSLVTSSSFISSSVISSSTTTSTSIFSESSTSSVIPTSSSTSGSSESKTSSASSSSSSSSISSESPKSPTNSSSSLPPVTSATTGQETASSLPPATTTKTSEQTTLVTVTSCESHVCTESISSAIVSTATVTVSGVTTEYTTWCPISTTETTKQTKGTTEQTKGTTEQTTETTKQTTVVTISSCESDICSKTASPAIVSTSTATINGVTTEYTTWCPISTTESKQQTTLVTVTSCESGVCSETTSPAIVSTATATVNDVVTVYPTWRPQTTNEQSVSSKMNSATSETTTNTGAAETKTAVTSSLSRFNHAETQTASATDVIGHSSSVVSVSETGNTMSLTSSGLSTMSQQPRSTPASSMVGSSTASLEISTYAGSANSLLAGSGLSVFIASLLLAII</sequence>
<reference key="1">
    <citation type="journal article" date="1994" name="Science">
        <title>Complete nucleotide sequence of Saccharomyces cerevisiae chromosome VIII.</title>
        <authorList>
            <person name="Johnston M."/>
            <person name="Andrews S."/>
            <person name="Brinkman R."/>
            <person name="Cooper J."/>
            <person name="Ding H."/>
            <person name="Dover J."/>
            <person name="Du Z."/>
            <person name="Favello A."/>
            <person name="Fulton L."/>
            <person name="Gattung S."/>
            <person name="Geisel C."/>
            <person name="Kirsten J."/>
            <person name="Kucaba T."/>
            <person name="Hillier L.W."/>
            <person name="Jier M."/>
            <person name="Johnston L."/>
            <person name="Langston Y."/>
            <person name="Latreille P."/>
            <person name="Louis E.J."/>
            <person name="Macri C."/>
            <person name="Mardis E."/>
            <person name="Menezes S."/>
            <person name="Mouser L."/>
            <person name="Nhan M."/>
            <person name="Rifkin L."/>
            <person name="Riles L."/>
            <person name="St Peter H."/>
            <person name="Trevaskis E."/>
            <person name="Vaughan K."/>
            <person name="Vignati D."/>
            <person name="Wilcox L."/>
            <person name="Wohldman P."/>
            <person name="Waterston R."/>
            <person name="Wilson R."/>
            <person name="Vaudin M."/>
        </authorList>
    </citation>
    <scope>NUCLEOTIDE SEQUENCE [LARGE SCALE GENOMIC DNA]</scope>
    <source>
        <strain>ATCC 204508 / S288c</strain>
    </source>
</reference>
<reference key="2">
    <citation type="journal article" date="2014" name="G3 (Bethesda)">
        <title>The reference genome sequence of Saccharomyces cerevisiae: Then and now.</title>
        <authorList>
            <person name="Engel S.R."/>
            <person name="Dietrich F.S."/>
            <person name="Fisk D.G."/>
            <person name="Binkley G."/>
            <person name="Balakrishnan R."/>
            <person name="Costanzo M.C."/>
            <person name="Dwight S.S."/>
            <person name="Hitz B.C."/>
            <person name="Karra K."/>
            <person name="Nash R.S."/>
            <person name="Weng S."/>
            <person name="Wong E.D."/>
            <person name="Lloyd P."/>
            <person name="Skrzypek M.S."/>
            <person name="Miyasato S.R."/>
            <person name="Simison M."/>
            <person name="Cherry J.M."/>
        </authorList>
    </citation>
    <scope>GENOME REANNOTATION</scope>
    <source>
        <strain>ATCC 204508 / S288c</strain>
    </source>
</reference>
<reference key="3">
    <citation type="journal article" date="1995" name="Yeast">
        <title>Localization of the dominant flocculation genes FLO5 and FLO8 of Saccharomyces cerevisiae.</title>
        <authorList>
            <person name="Teunissen A.W.R.H."/>
            <person name="van den Berg J.A."/>
            <person name="Steensma H.Y."/>
        </authorList>
    </citation>
    <scope>GENE MAPPING</scope>
</reference>
<reference key="4">
    <citation type="journal article" date="1995" name="Yeast">
        <title>Review: the dominant flocculation genes of Saccharomyces cerevisiae constitute a new subtelomeric gene family.</title>
        <authorList>
            <person name="Teunissen A.W.R.H."/>
            <person name="Steensma H.Y."/>
        </authorList>
    </citation>
    <scope>REVIEW</scope>
</reference>
<reference key="5">
    <citation type="journal article" date="1998" name="Yeast">
        <title>Distribution of the flocculation protein, flop, at the cell surface during yeast growth: the availability of flop determines the flocculation level.</title>
        <authorList>
            <person name="Bony M."/>
            <person name="Barre P."/>
            <person name="Blondin B."/>
        </authorList>
    </citation>
    <scope>SUBCELLULAR LOCATION</scope>
</reference>
<reference key="6">
    <citation type="journal article" date="2003" name="Appl. Microbiol. Biotechnol.">
        <title>Yeast flocculation: what brewers should know.</title>
        <authorList>
            <person name="Verstrepen K.J."/>
            <person name="Derdelinckx G."/>
            <person name="Verachtert H."/>
            <person name="Delvaux F.R."/>
        </authorList>
    </citation>
    <scope>BIOTECHNOLOGY</scope>
</reference>
<reference key="7">
    <citation type="journal article" date="2005" name="Nat. Genet.">
        <title>Intragenic tandem repeats generate functional variability.</title>
        <authorList>
            <person name="Verstrepen K.J."/>
            <person name="Jansen A."/>
            <person name="Lewitter F."/>
            <person name="Fink G.R."/>
        </authorList>
    </citation>
    <scope>REPEATS</scope>
</reference>
<reference key="8">
    <citation type="journal article" date="2006" name="FEMS Yeast Res.">
        <title>Control by sugar of Saccharomyces cerevisiae flocculation for industrial ethanol production.</title>
        <authorList>
            <person name="Cunha A.F."/>
            <person name="Missawa S.K."/>
            <person name="Gomes L.H."/>
            <person name="Reis S.F."/>
            <person name="Pereira G.A.G."/>
        </authorList>
    </citation>
    <scope>BIOTECHNOLOGY</scope>
</reference>
<comment type="function">
    <text>Cell wall protein that participates directly in adhesive cell-cell interactions during yeast flocculation, a reversible, asexual and Ca(2+)-dependent process in which cells adhere to form aggregates (flocs) consisting of thousands of cells. The lectin-like protein sticks out of the cell wall of flocculent cells and selectively binds mannose residues in the cell walls of adjacent cells. Activity is inhibited by mannose, but not by glucose, maltose, sucrose or galactose.</text>
</comment>
<comment type="subcellular location">
    <subcellularLocation>
        <location evidence="8">Secreted</location>
        <location evidence="8">Cell wall</location>
    </subcellularLocation>
    <subcellularLocation>
        <location evidence="9">Membrane</location>
        <topology evidence="9">Lipid-anchor</topology>
        <topology evidence="9">GPI-anchor</topology>
    </subcellularLocation>
    <text evidence="1">Covalently-linked GPI-modified cell wall protein (GPI-CWP).</text>
</comment>
<comment type="domain">
    <text evidence="1">The number of the intragenic tandem repeats varies between different S.cerevisiae strains. There is a linear correlation between protein size and the extend of adhesion: the more repeats, the stronger the adhesion properties and the greater the fraction of flocculating cells (By similarity).</text>
</comment>
<comment type="PTM">
    <text evidence="9">Extensively O-glycosylated.</text>
</comment>
<comment type="PTM">
    <text evidence="1">The GPI-anchor is attached to the protein in the endoplasmic reticulum and serves to target the protein to the cell surface. There, the glucosamine-inositol phospholipid moiety is cleaved off and the GPI-modified mannoprotein is covalently attached via its lipidless GPI glycan remnant to the 1,6-beta-glucan of the outer cell wall layer (By similarity).</text>
</comment>
<comment type="biotechnology">
    <text evidence="5 7">For many industrial applications in which the yeast S.cerevisiae is used, e.g. beer, wine and alcohol production, appropriate flocculation behavior is one of the most important characteristics of a good production strain. The ability of yeast cells to flocculate is of considerable importance, as it provides an effective, environment-friendly, simple and cost-free way to separate yeast cells from the fermentation product at the end of fermentation.</text>
</comment>
<comment type="similarity">
    <text evidence="9">Belongs to the flocculin family.</text>
</comment>